<protein>
    <recommendedName>
        <fullName evidence="1">Large ribosomal subunit protein bL31B</fullName>
    </recommendedName>
    <alternativeName>
        <fullName evidence="2">50S ribosomal protein L31 type B</fullName>
    </alternativeName>
</protein>
<evidence type="ECO:0000255" key="1">
    <source>
        <dbReference type="HAMAP-Rule" id="MF_00502"/>
    </source>
</evidence>
<evidence type="ECO:0000305" key="2"/>
<sequence length="93" mass="10215">MKPDIHPQYRTVLFHDTAADAYFLIGSTVDTDRTQQHTDGTTYPYVALDVSSASHPMYTGQQRKATTEGRIAGFNKRFATFGSAGKKETAAAQ</sequence>
<accession>Q4ZPH2</accession>
<dbReference type="EMBL" id="CP000075">
    <property type="protein sequence ID" value="AAY38950.1"/>
    <property type="molecule type" value="Genomic_DNA"/>
</dbReference>
<dbReference type="RefSeq" id="WP_011268736.1">
    <property type="nucleotide sequence ID" value="NC_007005.1"/>
</dbReference>
<dbReference type="RefSeq" id="YP_236988.1">
    <property type="nucleotide sequence ID" value="NC_007005.1"/>
</dbReference>
<dbReference type="SMR" id="Q4ZPH2"/>
<dbReference type="STRING" id="205918.Psyr_3920"/>
<dbReference type="KEGG" id="psb:Psyr_3920"/>
<dbReference type="PATRIC" id="fig|205918.7.peg.4033"/>
<dbReference type="eggNOG" id="COG0254">
    <property type="taxonomic scope" value="Bacteria"/>
</dbReference>
<dbReference type="HOGENOM" id="CLU_114306_2_1_6"/>
<dbReference type="OrthoDB" id="9803251at2"/>
<dbReference type="Proteomes" id="UP000000426">
    <property type="component" value="Chromosome"/>
</dbReference>
<dbReference type="GO" id="GO:1990904">
    <property type="term" value="C:ribonucleoprotein complex"/>
    <property type="evidence" value="ECO:0007669"/>
    <property type="project" value="UniProtKB-KW"/>
</dbReference>
<dbReference type="GO" id="GO:0005840">
    <property type="term" value="C:ribosome"/>
    <property type="evidence" value="ECO:0007669"/>
    <property type="project" value="UniProtKB-KW"/>
</dbReference>
<dbReference type="GO" id="GO:0003735">
    <property type="term" value="F:structural constituent of ribosome"/>
    <property type="evidence" value="ECO:0007669"/>
    <property type="project" value="InterPro"/>
</dbReference>
<dbReference type="GO" id="GO:0006412">
    <property type="term" value="P:translation"/>
    <property type="evidence" value="ECO:0007669"/>
    <property type="project" value="UniProtKB-UniRule"/>
</dbReference>
<dbReference type="Gene3D" id="4.10.830.30">
    <property type="entry name" value="Ribosomal protein L31"/>
    <property type="match status" value="1"/>
</dbReference>
<dbReference type="HAMAP" id="MF_00502">
    <property type="entry name" value="Ribosomal_bL31_2"/>
    <property type="match status" value="1"/>
</dbReference>
<dbReference type="InterPro" id="IPR034704">
    <property type="entry name" value="Ribosomal_bL28/bL31-like_sf"/>
</dbReference>
<dbReference type="InterPro" id="IPR002150">
    <property type="entry name" value="Ribosomal_bL31"/>
</dbReference>
<dbReference type="InterPro" id="IPR027493">
    <property type="entry name" value="Ribosomal_bL31_B"/>
</dbReference>
<dbReference type="InterPro" id="IPR042105">
    <property type="entry name" value="Ribosomal_bL31_sf"/>
</dbReference>
<dbReference type="NCBIfam" id="TIGR00105">
    <property type="entry name" value="L31"/>
    <property type="match status" value="1"/>
</dbReference>
<dbReference type="NCBIfam" id="NF002462">
    <property type="entry name" value="PRK01678.1"/>
    <property type="match status" value="1"/>
</dbReference>
<dbReference type="PANTHER" id="PTHR33280">
    <property type="entry name" value="50S RIBOSOMAL PROTEIN L31, CHLOROPLASTIC"/>
    <property type="match status" value="1"/>
</dbReference>
<dbReference type="PANTHER" id="PTHR33280:SF1">
    <property type="entry name" value="LARGE RIBOSOMAL SUBUNIT PROTEIN BL31C"/>
    <property type="match status" value="1"/>
</dbReference>
<dbReference type="Pfam" id="PF01197">
    <property type="entry name" value="Ribosomal_L31"/>
    <property type="match status" value="1"/>
</dbReference>
<dbReference type="PRINTS" id="PR01249">
    <property type="entry name" value="RIBOSOMALL31"/>
</dbReference>
<dbReference type="SUPFAM" id="SSF143800">
    <property type="entry name" value="L28p-like"/>
    <property type="match status" value="1"/>
</dbReference>
<comment type="subunit">
    <text evidence="1">Part of the 50S ribosomal subunit.</text>
</comment>
<comment type="similarity">
    <text evidence="1">Belongs to the bacterial ribosomal protein bL31 family. Type B subfamily.</text>
</comment>
<feature type="chain" id="PRO_0000259113" description="Large ribosomal subunit protein bL31B">
    <location>
        <begin position="1"/>
        <end position="93"/>
    </location>
</feature>
<gene>
    <name evidence="1" type="primary">rpmE2</name>
    <name type="ordered locus">Psyr_3920</name>
</gene>
<keyword id="KW-0687">Ribonucleoprotein</keyword>
<keyword id="KW-0689">Ribosomal protein</keyword>
<reference key="1">
    <citation type="journal article" date="2005" name="Proc. Natl. Acad. Sci. U.S.A.">
        <title>Comparison of the complete genome sequences of Pseudomonas syringae pv. syringae B728a and pv. tomato DC3000.</title>
        <authorList>
            <person name="Feil H."/>
            <person name="Feil W.S."/>
            <person name="Chain P."/>
            <person name="Larimer F."/>
            <person name="Dibartolo G."/>
            <person name="Copeland A."/>
            <person name="Lykidis A."/>
            <person name="Trong S."/>
            <person name="Nolan M."/>
            <person name="Goltsman E."/>
            <person name="Thiel J."/>
            <person name="Malfatti S."/>
            <person name="Loper J.E."/>
            <person name="Lapidus A."/>
            <person name="Detter J.C."/>
            <person name="Land M."/>
            <person name="Richardson P.M."/>
            <person name="Kyrpides N.C."/>
            <person name="Ivanova N."/>
            <person name="Lindow S.E."/>
        </authorList>
    </citation>
    <scope>NUCLEOTIDE SEQUENCE [LARGE SCALE GENOMIC DNA]</scope>
    <source>
        <strain>B728a</strain>
    </source>
</reference>
<name>RL31B_PSEU2</name>
<proteinExistence type="inferred from homology"/>
<organism>
    <name type="scientific">Pseudomonas syringae pv. syringae (strain B728a)</name>
    <dbReference type="NCBI Taxonomy" id="205918"/>
    <lineage>
        <taxon>Bacteria</taxon>
        <taxon>Pseudomonadati</taxon>
        <taxon>Pseudomonadota</taxon>
        <taxon>Gammaproteobacteria</taxon>
        <taxon>Pseudomonadales</taxon>
        <taxon>Pseudomonadaceae</taxon>
        <taxon>Pseudomonas</taxon>
        <taxon>Pseudomonas syringae</taxon>
    </lineage>
</organism>